<proteinExistence type="evidence at protein level"/>
<gene>
    <name evidence="5" type="primary">LECRK13</name>
    <name evidence="5" type="synonym">AtLecRK2</name>
    <name evidence="7" type="synonym">SR1</name>
    <name evidence="8" type="ordered locus">At3g45410</name>
    <name evidence="9" type="ORF">F18N11.170</name>
</gene>
<feature type="signal peptide" evidence="1">
    <location>
        <begin position="1"/>
        <end position="21"/>
    </location>
</feature>
<feature type="chain" id="PRO_0000403072" description="L-type lectin-domain containing receptor kinase I.3">
    <location>
        <begin position="22"/>
        <end position="664"/>
    </location>
</feature>
<feature type="topological domain" description="Extracellular" evidence="1">
    <location>
        <begin position="22"/>
        <end position="286"/>
    </location>
</feature>
<feature type="transmembrane region" description="Helical" evidence="1">
    <location>
        <begin position="287"/>
        <end position="307"/>
    </location>
</feature>
<feature type="topological domain" description="Cytoplasmic" evidence="1">
    <location>
        <begin position="308"/>
        <end position="664"/>
    </location>
</feature>
<feature type="domain" description="Protein kinase" evidence="2">
    <location>
        <begin position="342"/>
        <end position="619"/>
    </location>
</feature>
<feature type="region of interest" description="Legume-lectin like" evidence="1">
    <location>
        <begin position="24"/>
        <end position="257"/>
    </location>
</feature>
<feature type="active site" description="Proton acceptor" evidence="2">
    <location>
        <position position="466"/>
    </location>
</feature>
<feature type="binding site" evidence="2">
    <location>
        <begin position="348"/>
        <end position="356"/>
    </location>
    <ligand>
        <name>ATP</name>
        <dbReference type="ChEBI" id="CHEBI:30616"/>
    </ligand>
</feature>
<feature type="binding site" evidence="2">
    <location>
        <position position="370"/>
    </location>
    <ligand>
        <name>ATP</name>
        <dbReference type="ChEBI" id="CHEBI:30616"/>
    </ligand>
</feature>
<feature type="glycosylation site" description="N-linked (GlcNAc...) asparagine" evidence="1">
    <location>
        <position position="55"/>
    </location>
</feature>
<feature type="glycosylation site" description="N-linked (GlcNAc...) asparagine" evidence="1">
    <location>
        <position position="125"/>
    </location>
</feature>
<feature type="glycosylation site" description="N-linked (GlcNAc...) asparagine" evidence="1">
    <location>
        <position position="128"/>
    </location>
</feature>
<feature type="glycosylation site" description="N-linked (GlcNAc...) asparagine" evidence="1">
    <location>
        <position position="181"/>
    </location>
</feature>
<feature type="glycosylation site" description="N-linked (GlcNAc...) asparagine" evidence="1">
    <location>
        <position position="204"/>
    </location>
</feature>
<feature type="glycosylation site" description="N-linked (GlcNAc...) asparagine" evidence="1">
    <location>
        <position position="225"/>
    </location>
</feature>
<feature type="glycosylation site" description="N-linked (GlcNAc...) asparagine" evidence="1">
    <location>
        <position position="267"/>
    </location>
</feature>
<name>LRK13_ARATH</name>
<reference key="1">
    <citation type="journal article" date="2004" name="Theor. Appl. Genet.">
        <title>A salt-responsive receptor-like kinase gene regulated by the ethylene signaling pathway encodes a plasma membrane serine/threonine kinase.</title>
        <authorList>
            <person name="He X.-J."/>
            <person name="Zhang Z.-G."/>
            <person name="Yan D.-Q."/>
            <person name="Zhang J.-S."/>
            <person name="Chen S.-Y."/>
        </authorList>
    </citation>
    <scope>NUCLEOTIDE SEQUENCE [MRNA]</scope>
    <scope>SUBCELLULAR LOCATION</scope>
    <scope>TISSUE SPECIFICITY</scope>
    <scope>AUTOPHOSPHORYLATION</scope>
    <scope>CATALYTIC ACTIVITY</scope>
    <scope>INDUCTION BY SALT AND ETHYLENE</scope>
</reference>
<reference key="2">
    <citation type="journal article" date="2000" name="Nature">
        <title>Sequence and analysis of chromosome 3 of the plant Arabidopsis thaliana.</title>
        <authorList>
            <person name="Salanoubat M."/>
            <person name="Lemcke K."/>
            <person name="Rieger M."/>
            <person name="Ansorge W."/>
            <person name="Unseld M."/>
            <person name="Fartmann B."/>
            <person name="Valle G."/>
            <person name="Bloecker H."/>
            <person name="Perez-Alonso M."/>
            <person name="Obermaier B."/>
            <person name="Delseny M."/>
            <person name="Boutry M."/>
            <person name="Grivell L.A."/>
            <person name="Mache R."/>
            <person name="Puigdomenech P."/>
            <person name="De Simone V."/>
            <person name="Choisne N."/>
            <person name="Artiguenave F."/>
            <person name="Robert C."/>
            <person name="Brottier P."/>
            <person name="Wincker P."/>
            <person name="Cattolico L."/>
            <person name="Weissenbach J."/>
            <person name="Saurin W."/>
            <person name="Quetier F."/>
            <person name="Schaefer M."/>
            <person name="Mueller-Auer S."/>
            <person name="Gabel C."/>
            <person name="Fuchs M."/>
            <person name="Benes V."/>
            <person name="Wurmbach E."/>
            <person name="Drzonek H."/>
            <person name="Erfle H."/>
            <person name="Jordan N."/>
            <person name="Bangert S."/>
            <person name="Wiedelmann R."/>
            <person name="Kranz H."/>
            <person name="Voss H."/>
            <person name="Holland R."/>
            <person name="Brandt P."/>
            <person name="Nyakatura G."/>
            <person name="Vezzi A."/>
            <person name="D'Angelo M."/>
            <person name="Pallavicini A."/>
            <person name="Toppo S."/>
            <person name="Simionati B."/>
            <person name="Conrad A."/>
            <person name="Hornischer K."/>
            <person name="Kauer G."/>
            <person name="Loehnert T.-H."/>
            <person name="Nordsiek G."/>
            <person name="Reichelt J."/>
            <person name="Scharfe M."/>
            <person name="Schoen O."/>
            <person name="Bargues M."/>
            <person name="Terol J."/>
            <person name="Climent J."/>
            <person name="Navarro P."/>
            <person name="Collado C."/>
            <person name="Perez-Perez A."/>
            <person name="Ottenwaelder B."/>
            <person name="Duchemin D."/>
            <person name="Cooke R."/>
            <person name="Laudie M."/>
            <person name="Berger-Llauro C."/>
            <person name="Purnelle B."/>
            <person name="Masuy D."/>
            <person name="de Haan M."/>
            <person name="Maarse A.C."/>
            <person name="Alcaraz J.-P."/>
            <person name="Cottet A."/>
            <person name="Casacuberta E."/>
            <person name="Monfort A."/>
            <person name="Argiriou A."/>
            <person name="Flores M."/>
            <person name="Liguori R."/>
            <person name="Vitale D."/>
            <person name="Mannhaupt G."/>
            <person name="Haase D."/>
            <person name="Schoof H."/>
            <person name="Rudd S."/>
            <person name="Zaccaria P."/>
            <person name="Mewes H.-W."/>
            <person name="Mayer K.F.X."/>
            <person name="Kaul S."/>
            <person name="Town C.D."/>
            <person name="Koo H.L."/>
            <person name="Tallon L.J."/>
            <person name="Jenkins J."/>
            <person name="Rooney T."/>
            <person name="Rizzo M."/>
            <person name="Walts A."/>
            <person name="Utterback T."/>
            <person name="Fujii C.Y."/>
            <person name="Shea T.P."/>
            <person name="Creasy T.H."/>
            <person name="Haas B."/>
            <person name="Maiti R."/>
            <person name="Wu D."/>
            <person name="Peterson J."/>
            <person name="Van Aken S."/>
            <person name="Pai G."/>
            <person name="Militscher J."/>
            <person name="Sellers P."/>
            <person name="Gill J.E."/>
            <person name="Feldblyum T.V."/>
            <person name="Preuss D."/>
            <person name="Lin X."/>
            <person name="Nierman W.C."/>
            <person name="Salzberg S.L."/>
            <person name="White O."/>
            <person name="Venter J.C."/>
            <person name="Fraser C.M."/>
            <person name="Kaneko T."/>
            <person name="Nakamura Y."/>
            <person name="Sato S."/>
            <person name="Kato T."/>
            <person name="Asamizu E."/>
            <person name="Sasamoto S."/>
            <person name="Kimura T."/>
            <person name="Idesawa K."/>
            <person name="Kawashima K."/>
            <person name="Kishida Y."/>
            <person name="Kiyokawa C."/>
            <person name="Kohara M."/>
            <person name="Matsumoto M."/>
            <person name="Matsuno A."/>
            <person name="Muraki A."/>
            <person name="Nakayama S."/>
            <person name="Nakazaki N."/>
            <person name="Shinpo S."/>
            <person name="Takeuchi C."/>
            <person name="Wada T."/>
            <person name="Watanabe A."/>
            <person name="Yamada M."/>
            <person name="Yasuda M."/>
            <person name="Tabata S."/>
        </authorList>
    </citation>
    <scope>NUCLEOTIDE SEQUENCE [LARGE SCALE GENOMIC DNA]</scope>
    <source>
        <strain>cv. Columbia</strain>
    </source>
</reference>
<reference key="3">
    <citation type="journal article" date="2017" name="Plant J.">
        <title>Araport11: a complete reannotation of the Arabidopsis thaliana reference genome.</title>
        <authorList>
            <person name="Cheng C.Y."/>
            <person name="Krishnakumar V."/>
            <person name="Chan A.P."/>
            <person name="Thibaud-Nissen F."/>
            <person name="Schobel S."/>
            <person name="Town C.D."/>
        </authorList>
    </citation>
    <scope>GENOME REANNOTATION</scope>
    <source>
        <strain>cv. Columbia</strain>
    </source>
</reference>
<reference key="4">
    <citation type="journal article" date="2002" name="Crit. Rev. Plant Sci.">
        <title>Lectin receptor kinases in plants.</title>
        <authorList>
            <person name="Barre A."/>
            <person name="Herve C."/>
            <person name="Lescure B."/>
            <person name="Rouge P."/>
        </authorList>
    </citation>
    <scope>GENE FAMILY</scope>
</reference>
<reference key="5">
    <citation type="journal article" date="2009" name="J. Exp. Bot.">
        <title>Arabidopsis L-type lectin receptor kinases: phylogeny, classification, and expression profiles.</title>
        <authorList>
            <person name="Bouwmeester K."/>
            <person name="Govers F."/>
        </authorList>
    </citation>
    <scope>GENE FAMILY</scope>
    <scope>NOMENCLATURE</scope>
</reference>
<reference key="6">
    <citation type="journal article" date="2014" name="Mol. Plant Microbe Interact.">
        <title>Phenotypic analyses of Arabidopsis T-DNA insertion lines and expression profiling reveal that multiple L-type lectin receptor kinases are involved in plant immunity.</title>
        <authorList>
            <person name="Wang Y."/>
            <person name="Bouwmeester K."/>
            <person name="Beseh P."/>
            <person name="Shan W."/>
            <person name="Govers F."/>
        </authorList>
    </citation>
    <scope>FUNCTION</scope>
    <scope>DISRUPTION PHENOTYPE</scope>
    <source>
        <strain>cv. Columbia</strain>
    </source>
</reference>
<comment type="function">
    <text evidence="4">Involved in resistance response to the pathogenic fungus Alternaria brassicicola.</text>
</comment>
<comment type="catalytic activity">
    <reaction evidence="2 3">
        <text>L-seryl-[protein] + ATP = O-phospho-L-seryl-[protein] + ADP + H(+)</text>
        <dbReference type="Rhea" id="RHEA:17989"/>
        <dbReference type="Rhea" id="RHEA-COMP:9863"/>
        <dbReference type="Rhea" id="RHEA-COMP:11604"/>
        <dbReference type="ChEBI" id="CHEBI:15378"/>
        <dbReference type="ChEBI" id="CHEBI:29999"/>
        <dbReference type="ChEBI" id="CHEBI:30616"/>
        <dbReference type="ChEBI" id="CHEBI:83421"/>
        <dbReference type="ChEBI" id="CHEBI:456216"/>
        <dbReference type="EC" id="2.7.11.1"/>
    </reaction>
</comment>
<comment type="catalytic activity">
    <reaction evidence="2 3">
        <text>L-threonyl-[protein] + ATP = O-phospho-L-threonyl-[protein] + ADP + H(+)</text>
        <dbReference type="Rhea" id="RHEA:46608"/>
        <dbReference type="Rhea" id="RHEA-COMP:11060"/>
        <dbReference type="Rhea" id="RHEA-COMP:11605"/>
        <dbReference type="ChEBI" id="CHEBI:15378"/>
        <dbReference type="ChEBI" id="CHEBI:30013"/>
        <dbReference type="ChEBI" id="CHEBI:30616"/>
        <dbReference type="ChEBI" id="CHEBI:61977"/>
        <dbReference type="ChEBI" id="CHEBI:456216"/>
        <dbReference type="EC" id="2.7.11.1"/>
    </reaction>
</comment>
<comment type="subcellular location">
    <subcellularLocation>
        <location evidence="3">Cell membrane</location>
        <topology evidence="1">Single-pass type I membrane protein</topology>
    </subcellularLocation>
</comment>
<comment type="tissue specificity">
    <text evidence="3">Mostly expressed in roots and flowers, and, to a lower extent, in leaves.</text>
</comment>
<comment type="induction">
    <text evidence="3">By salt and ethylene (ET).</text>
</comment>
<comment type="PTM">
    <text evidence="3">Autophosphorylated on Ser and Thr residues.</text>
</comment>
<comment type="disruption phenotype">
    <text evidence="4">Increased susceptibility to the fungus Alternaria brassicicola.</text>
</comment>
<comment type="similarity">
    <text evidence="6">In the C-terminal section; belongs to the protein kinase superfamily. Ser/Thr protein kinase family.</text>
</comment>
<comment type="similarity">
    <text evidence="6">In the N-terminal section; belongs to the leguminous lectin family.</text>
</comment>
<dbReference type="EC" id="2.7.11.1" evidence="2 3"/>
<dbReference type="EMBL" id="AY376441">
    <property type="protein sequence ID" value="AAQ83688.1"/>
    <property type="molecule type" value="mRNA"/>
</dbReference>
<dbReference type="EMBL" id="AL132953">
    <property type="protein sequence ID" value="CAB72490.1"/>
    <property type="molecule type" value="Genomic_DNA"/>
</dbReference>
<dbReference type="EMBL" id="CP002686">
    <property type="protein sequence ID" value="AEE78027.1"/>
    <property type="molecule type" value="Genomic_DNA"/>
</dbReference>
<dbReference type="PIR" id="T47481">
    <property type="entry name" value="T47481"/>
</dbReference>
<dbReference type="RefSeq" id="NP_190127.1">
    <property type="nucleotide sequence ID" value="NM_114410.3"/>
</dbReference>
<dbReference type="SMR" id="Q9M3D8"/>
<dbReference type="FunCoup" id="Q9M3D8">
    <property type="interactions" value="7"/>
</dbReference>
<dbReference type="STRING" id="3702.Q9M3D8"/>
<dbReference type="GlyCosmos" id="Q9M3D8">
    <property type="glycosylation" value="7 sites, No reported glycans"/>
</dbReference>
<dbReference type="GlyGen" id="Q9M3D8">
    <property type="glycosylation" value="7 sites"/>
</dbReference>
<dbReference type="iPTMnet" id="Q9M3D8"/>
<dbReference type="PaxDb" id="3702-AT3G45410.1"/>
<dbReference type="ProteomicsDB" id="238391"/>
<dbReference type="EnsemblPlants" id="AT3G45410.1">
    <property type="protein sequence ID" value="AT3G45410.1"/>
    <property type="gene ID" value="AT3G45410"/>
</dbReference>
<dbReference type="GeneID" id="823679"/>
<dbReference type="Gramene" id="AT3G45410.1">
    <property type="protein sequence ID" value="AT3G45410.1"/>
    <property type="gene ID" value="AT3G45410"/>
</dbReference>
<dbReference type="KEGG" id="ath:AT3G45410"/>
<dbReference type="Araport" id="AT3G45410"/>
<dbReference type="TAIR" id="AT3G45410">
    <property type="gene designation" value="LECRK-I.3"/>
</dbReference>
<dbReference type="eggNOG" id="ENOG502QSJ4">
    <property type="taxonomic scope" value="Eukaryota"/>
</dbReference>
<dbReference type="HOGENOM" id="CLU_000288_62_3_1"/>
<dbReference type="InParanoid" id="Q9M3D8"/>
<dbReference type="OMA" id="CTNAMPE"/>
<dbReference type="PhylomeDB" id="Q9M3D8"/>
<dbReference type="PRO" id="PR:Q9M3D8"/>
<dbReference type="Proteomes" id="UP000006548">
    <property type="component" value="Chromosome 3"/>
</dbReference>
<dbReference type="ExpressionAtlas" id="Q9M3D8">
    <property type="expression patterns" value="baseline and differential"/>
</dbReference>
<dbReference type="GO" id="GO:0005886">
    <property type="term" value="C:plasma membrane"/>
    <property type="evidence" value="ECO:0000314"/>
    <property type="project" value="UniProtKB"/>
</dbReference>
<dbReference type="GO" id="GO:0005524">
    <property type="term" value="F:ATP binding"/>
    <property type="evidence" value="ECO:0007669"/>
    <property type="project" value="UniProtKB-KW"/>
</dbReference>
<dbReference type="GO" id="GO:0030246">
    <property type="term" value="F:carbohydrate binding"/>
    <property type="evidence" value="ECO:0007669"/>
    <property type="project" value="UniProtKB-KW"/>
</dbReference>
<dbReference type="GO" id="GO:0106310">
    <property type="term" value="F:protein serine kinase activity"/>
    <property type="evidence" value="ECO:0007669"/>
    <property type="project" value="RHEA"/>
</dbReference>
<dbReference type="GO" id="GO:0004674">
    <property type="term" value="F:protein serine/threonine kinase activity"/>
    <property type="evidence" value="ECO:0000314"/>
    <property type="project" value="UniProtKB"/>
</dbReference>
<dbReference type="GO" id="GO:0004675">
    <property type="term" value="F:transmembrane receptor protein serine/threonine kinase activity"/>
    <property type="evidence" value="ECO:0000314"/>
    <property type="project" value="TAIR"/>
</dbReference>
<dbReference type="GO" id="GO:0071369">
    <property type="term" value="P:cellular response to ethylene stimulus"/>
    <property type="evidence" value="ECO:0000270"/>
    <property type="project" value="UniProtKB"/>
</dbReference>
<dbReference type="GO" id="GO:0071472">
    <property type="term" value="P:cellular response to salt stress"/>
    <property type="evidence" value="ECO:0000270"/>
    <property type="project" value="UniProtKB"/>
</dbReference>
<dbReference type="GO" id="GO:0050832">
    <property type="term" value="P:defense response to fungus"/>
    <property type="evidence" value="ECO:0000315"/>
    <property type="project" value="UniProtKB"/>
</dbReference>
<dbReference type="GO" id="GO:0046777">
    <property type="term" value="P:protein autophosphorylation"/>
    <property type="evidence" value="ECO:0000314"/>
    <property type="project" value="UniProtKB"/>
</dbReference>
<dbReference type="CDD" id="cd06899">
    <property type="entry name" value="lectin_legume_LecRK_Arcelin_ConA"/>
    <property type="match status" value="1"/>
</dbReference>
<dbReference type="CDD" id="cd14066">
    <property type="entry name" value="STKc_IRAK"/>
    <property type="match status" value="1"/>
</dbReference>
<dbReference type="FunFam" id="3.30.200.20:FF:000451">
    <property type="entry name" value="L-type lectin-domain containing receptor kinase I.9"/>
    <property type="match status" value="1"/>
</dbReference>
<dbReference type="FunFam" id="1.10.510.10:FF:000108">
    <property type="entry name" value="L-type lectin-domain containing receptor kinase S.4"/>
    <property type="match status" value="1"/>
</dbReference>
<dbReference type="FunFam" id="2.60.120.200:FF:000096">
    <property type="entry name" value="L-type lectin-domain containing receptor kinase V.9"/>
    <property type="match status" value="1"/>
</dbReference>
<dbReference type="Gene3D" id="2.60.120.200">
    <property type="match status" value="1"/>
</dbReference>
<dbReference type="Gene3D" id="3.30.200.20">
    <property type="entry name" value="Phosphorylase Kinase, domain 1"/>
    <property type="match status" value="1"/>
</dbReference>
<dbReference type="Gene3D" id="1.10.510.10">
    <property type="entry name" value="Transferase(Phosphotransferase) domain 1"/>
    <property type="match status" value="1"/>
</dbReference>
<dbReference type="InterPro" id="IPR013320">
    <property type="entry name" value="ConA-like_dom_sf"/>
</dbReference>
<dbReference type="InterPro" id="IPR011009">
    <property type="entry name" value="Kinase-like_dom_sf"/>
</dbReference>
<dbReference type="InterPro" id="IPR050528">
    <property type="entry name" value="L-type_Lectin-RKs"/>
</dbReference>
<dbReference type="InterPro" id="IPR001220">
    <property type="entry name" value="Legume_lectin_dom"/>
</dbReference>
<dbReference type="InterPro" id="IPR000719">
    <property type="entry name" value="Prot_kinase_dom"/>
</dbReference>
<dbReference type="InterPro" id="IPR017441">
    <property type="entry name" value="Protein_kinase_ATP_BS"/>
</dbReference>
<dbReference type="InterPro" id="IPR008271">
    <property type="entry name" value="Ser/Thr_kinase_AS"/>
</dbReference>
<dbReference type="PANTHER" id="PTHR27007">
    <property type="match status" value="1"/>
</dbReference>
<dbReference type="Pfam" id="PF00139">
    <property type="entry name" value="Lectin_legB"/>
    <property type="match status" value="1"/>
</dbReference>
<dbReference type="Pfam" id="PF00069">
    <property type="entry name" value="Pkinase"/>
    <property type="match status" value="1"/>
</dbReference>
<dbReference type="SMART" id="SM00220">
    <property type="entry name" value="S_TKc"/>
    <property type="match status" value="1"/>
</dbReference>
<dbReference type="SUPFAM" id="SSF49899">
    <property type="entry name" value="Concanavalin A-like lectins/glucanases"/>
    <property type="match status" value="1"/>
</dbReference>
<dbReference type="SUPFAM" id="SSF56112">
    <property type="entry name" value="Protein kinase-like (PK-like)"/>
    <property type="match status" value="1"/>
</dbReference>
<dbReference type="PROSITE" id="PS00107">
    <property type="entry name" value="PROTEIN_KINASE_ATP"/>
    <property type="match status" value="1"/>
</dbReference>
<dbReference type="PROSITE" id="PS50011">
    <property type="entry name" value="PROTEIN_KINASE_DOM"/>
    <property type="match status" value="1"/>
</dbReference>
<dbReference type="PROSITE" id="PS00108">
    <property type="entry name" value="PROTEIN_KINASE_ST"/>
    <property type="match status" value="1"/>
</dbReference>
<organism>
    <name type="scientific">Arabidopsis thaliana</name>
    <name type="common">Mouse-ear cress</name>
    <dbReference type="NCBI Taxonomy" id="3702"/>
    <lineage>
        <taxon>Eukaryota</taxon>
        <taxon>Viridiplantae</taxon>
        <taxon>Streptophyta</taxon>
        <taxon>Embryophyta</taxon>
        <taxon>Tracheophyta</taxon>
        <taxon>Spermatophyta</taxon>
        <taxon>Magnoliopsida</taxon>
        <taxon>eudicotyledons</taxon>
        <taxon>Gunneridae</taxon>
        <taxon>Pentapetalae</taxon>
        <taxon>rosids</taxon>
        <taxon>malvids</taxon>
        <taxon>Brassicales</taxon>
        <taxon>Brassicaceae</taxon>
        <taxon>Camelineae</taxon>
        <taxon>Arabidopsis</taxon>
    </lineage>
</organism>
<evidence type="ECO:0000255" key="1"/>
<evidence type="ECO:0000255" key="2">
    <source>
        <dbReference type="PROSITE-ProRule" id="PRU00159"/>
    </source>
</evidence>
<evidence type="ECO:0000269" key="3">
    <source>
    </source>
</evidence>
<evidence type="ECO:0000269" key="4">
    <source>
    </source>
</evidence>
<evidence type="ECO:0000303" key="5">
    <source>
    </source>
</evidence>
<evidence type="ECO:0000305" key="6"/>
<evidence type="ECO:0000305" key="7">
    <source>
    </source>
</evidence>
<evidence type="ECO:0000312" key="8">
    <source>
        <dbReference type="Araport" id="AT3G45410"/>
    </source>
</evidence>
<evidence type="ECO:0000312" key="9">
    <source>
        <dbReference type="EMBL" id="CAB72490.1"/>
    </source>
</evidence>
<protein>
    <recommendedName>
        <fullName evidence="5">L-type lectin-domain containing receptor kinase I.3</fullName>
        <shortName evidence="5">AtLecRK2</shortName>
        <shortName evidence="5">LecRK-I.3</shortName>
        <ecNumber evidence="2 3">2.7.11.1</ecNumber>
    </recommendedName>
    <alternativeName>
        <fullName evidence="7">Salt-responsive receptor protein kinase 1</fullName>
    </alternativeName>
</protein>
<sequence>MACRLYLALIFSCVYLICLSSQQETGFVYNGFEQADLFIDGIAKILPDGLLQLTNTTELQMGHAFFKKPFDFDPSSSLSFYTHFVCALVPPKLGADGGHGIVFVVSPSIDLSHAYATQYLGVFSNLTNGTSSSHLLAIELDTVKTVEFNELEKPHVGIDLNSPISVESALPSYFSNALGKNISINLLSGEPIQVWVDYDGSFLNVTLAPIEIKKPNQPLISRAINLSEIFQEKMYVGFSSSTGNLLSNHYILGWSFSRRKEQLQSLNLSTLPRVPLPKEEKKKLSPLLIGLVILLVIPVVMVLGGVYWYRRKKYAEVKEWWEKEYGPHRFSYKSLYKATNGFRKDCRVGKGGFGEVYKGTLPGGRHIAVKRLSHDAEQGMKQFVAEVVTMGNLQHRNLVPLLGYCRRKCELLLVSEYMPNGSLDQYLFHEGNPSPSWYQRISILKDIASALSYLHTGTKQVVLHRDIKASNVMLDSEFNGRLGDFGMAKFHDRGTNLSATAAVGTIGYMAPELITMGTSMKTDVYAFGAFLLEVICGRRPVEPELPVGKQYLVKWVYECWKEACLFKTRDPRLGVEFLPEEVEMVLKLGLLCTNAMPESRPAMEQVVQYLNQDLPLPIFSPSTPGIGAFMPVSMEALSAIGVSSVRNSSVSMFVTHTILDGHGR</sequence>
<accession>Q9M3D8</accession>
<keyword id="KW-0067">ATP-binding</keyword>
<keyword id="KW-1003">Cell membrane</keyword>
<keyword id="KW-0325">Glycoprotein</keyword>
<keyword id="KW-0418">Kinase</keyword>
<keyword id="KW-0430">Lectin</keyword>
<keyword id="KW-0472">Membrane</keyword>
<keyword id="KW-0547">Nucleotide-binding</keyword>
<keyword id="KW-0611">Plant defense</keyword>
<keyword id="KW-0675">Receptor</keyword>
<keyword id="KW-1185">Reference proteome</keyword>
<keyword id="KW-0723">Serine/threonine-protein kinase</keyword>
<keyword id="KW-0732">Signal</keyword>
<keyword id="KW-0808">Transferase</keyword>
<keyword id="KW-0812">Transmembrane</keyword>
<keyword id="KW-1133">Transmembrane helix</keyword>